<accession>P30272</accession>
<accession>A4QQQ3</accession>
<accession>G4NG02</accession>
<proteinExistence type="inferred from homology"/>
<reference key="1">
    <citation type="journal article" date="1992" name="Mol. Gen. Genet.">
        <title>Cloning and analysis of CUT1, a cutinase gene from Magnaporthe grisea.</title>
        <authorList>
            <person name="Sweigard J.A."/>
            <person name="Chumley F.G."/>
            <person name="Valent B."/>
        </authorList>
    </citation>
    <scope>NUCLEOTIDE SEQUENCE [GENOMIC DNA]</scope>
    <source>
        <strain>4091-5-8</strain>
    </source>
</reference>
<reference key="2">
    <citation type="journal article" date="2005" name="Nature">
        <title>The genome sequence of the rice blast fungus Magnaporthe grisea.</title>
        <authorList>
            <person name="Dean R.A."/>
            <person name="Talbot N.J."/>
            <person name="Ebbole D.J."/>
            <person name="Farman M.L."/>
            <person name="Mitchell T.K."/>
            <person name="Orbach M.J."/>
            <person name="Thon M.R."/>
            <person name="Kulkarni R."/>
            <person name="Xu J.-R."/>
            <person name="Pan H."/>
            <person name="Read N.D."/>
            <person name="Lee Y.-H."/>
            <person name="Carbone I."/>
            <person name="Brown D."/>
            <person name="Oh Y.Y."/>
            <person name="Donofrio N."/>
            <person name="Jeong J.S."/>
            <person name="Soanes D.M."/>
            <person name="Djonovic S."/>
            <person name="Kolomiets E."/>
            <person name="Rehmeyer C."/>
            <person name="Li W."/>
            <person name="Harding M."/>
            <person name="Kim S."/>
            <person name="Lebrun M.-H."/>
            <person name="Bohnert H."/>
            <person name="Coughlan S."/>
            <person name="Butler J."/>
            <person name="Calvo S.E."/>
            <person name="Ma L.-J."/>
            <person name="Nicol R."/>
            <person name="Purcell S."/>
            <person name="Nusbaum C."/>
            <person name="Galagan J.E."/>
            <person name="Birren B.W."/>
        </authorList>
    </citation>
    <scope>NUCLEOTIDE SEQUENCE [LARGE SCALE GENOMIC DNA]</scope>
    <source>
        <strain>70-15 / ATCC MYA-4617 / FGSC 8958</strain>
    </source>
</reference>
<sequence length="228" mass="24192">MQFITVALTLIALASASPIATNVEKPSELEARQLNSVRNDLISGNAAACPSVILIFARASGEVGNMGLSAGTNVASALEREFRNDIWVQGVGDPYDAALSPNFLPAGTTQGAIDEAKRMFTLANTKCPNAAVVAGGYSQGTAVMFNAVSEMPAAVQDQIKGVVLFGYTKNLQNRGRIPDFPTEKTEVYCNASDAVCFGTLFLLPAHFLYTTESSIAAPNWLIRQIRAA</sequence>
<organism>
    <name type="scientific">Pyricularia oryzae (strain 70-15 / ATCC MYA-4617 / FGSC 8958)</name>
    <name type="common">Rice blast fungus</name>
    <name type="synonym">Magnaporthe oryzae</name>
    <dbReference type="NCBI Taxonomy" id="242507"/>
    <lineage>
        <taxon>Eukaryota</taxon>
        <taxon>Fungi</taxon>
        <taxon>Dikarya</taxon>
        <taxon>Ascomycota</taxon>
        <taxon>Pezizomycotina</taxon>
        <taxon>Sordariomycetes</taxon>
        <taxon>Sordariomycetidae</taxon>
        <taxon>Magnaporthales</taxon>
        <taxon>Pyriculariaceae</taxon>
        <taxon>Pyricularia</taxon>
    </lineage>
</organism>
<evidence type="ECO:0000250" key="1">
    <source>
        <dbReference type="UniProtKB" id="G4MZV6"/>
    </source>
</evidence>
<evidence type="ECO:0000250" key="2">
    <source>
        <dbReference type="UniProtKB" id="P00590"/>
    </source>
</evidence>
<evidence type="ECO:0000250" key="3">
    <source>
        <dbReference type="UniProtKB" id="P11373"/>
    </source>
</evidence>
<evidence type="ECO:0000255" key="4"/>
<evidence type="ECO:0000255" key="5">
    <source>
        <dbReference type="PROSITE-ProRule" id="PRU10108"/>
    </source>
</evidence>
<evidence type="ECO:0000255" key="6">
    <source>
        <dbReference type="PROSITE-ProRule" id="PRU10109"/>
    </source>
</evidence>
<evidence type="ECO:0000303" key="7">
    <source>
    </source>
</evidence>
<evidence type="ECO:0000305" key="8"/>
<name>CUTI1_PYRO7</name>
<keyword id="KW-1015">Disulfide bond</keyword>
<keyword id="KW-0325">Glycoprotein</keyword>
<keyword id="KW-0378">Hydrolase</keyword>
<keyword id="KW-1185">Reference proteome</keyword>
<keyword id="KW-0964">Secreted</keyword>
<keyword id="KW-0719">Serine esterase</keyword>
<keyword id="KW-0732">Signal</keyword>
<keyword id="KW-0843">Virulence</keyword>
<feature type="signal peptide" evidence="4">
    <location>
        <begin position="1"/>
        <end position="16"/>
    </location>
</feature>
<feature type="chain" id="PRO_0000006443" description="Cutinase CUT1">
    <location>
        <begin position="17"/>
        <end position="228"/>
    </location>
</feature>
<feature type="active site" description="Nucleophile" evidence="2">
    <location>
        <position position="138"/>
    </location>
</feature>
<feature type="active site" evidence="2">
    <location>
        <position position="193"/>
    </location>
</feature>
<feature type="active site" description="Proton donor/acceptor" evidence="2">
    <location>
        <position position="206"/>
    </location>
</feature>
<feature type="site" description="Transition state stabilizer" evidence="2">
    <location>
        <position position="60"/>
    </location>
</feature>
<feature type="site" description="Transition state stabilizer" evidence="2">
    <location>
        <position position="139"/>
    </location>
</feature>
<feature type="glycosylation site" description="N-linked (GlcNAc...) asparagine" evidence="4">
    <location>
        <position position="190"/>
    </location>
</feature>
<feature type="disulfide bond" evidence="2">
    <location>
        <begin position="49"/>
        <end position="127"/>
    </location>
</feature>
<feature type="disulfide bond" evidence="2">
    <location>
        <begin position="189"/>
        <end position="196"/>
    </location>
</feature>
<feature type="sequence variant" description="In strain: 4091-5-8.">
    <original>A</original>
    <variation>R</variation>
    <location>
        <position position="77"/>
    </location>
</feature>
<gene>
    <name evidence="7" type="primary">CUT1</name>
    <name type="ORF">MGG_01943</name>
</gene>
<comment type="function">
    <text evidence="1">Catalyzes the hydrolysis of complex carboxylic polyesters found in the cell wall of plants (By similarity). Degrades cutin, a macromolecule that forms the structure of the plant cuticle (By similarity). Required for efficient penetration of the host plant cuticle by the appressorium during the initial stage of fungal infection (By similarity).</text>
</comment>
<comment type="catalytic activity">
    <reaction evidence="5 6">
        <text>cutin + H2O = cutin monomers.</text>
        <dbReference type="EC" id="3.1.1.74"/>
    </reaction>
</comment>
<comment type="subcellular location">
    <subcellularLocation>
        <location evidence="3">Secreted</location>
    </subcellularLocation>
</comment>
<comment type="PTM">
    <text evidence="3">The 2 disulfide bonds play a critical role in holding the catalytic residues in juxta-position; reduction of the disulfide bridges results in the complete inactivation of the enzyme.</text>
</comment>
<comment type="similarity">
    <text evidence="8">Belongs to the cutinase family.</text>
</comment>
<protein>
    <recommendedName>
        <fullName evidence="7">Cutinase CUT1</fullName>
        <ecNumber evidence="5 6">3.1.1.74</ecNumber>
    </recommendedName>
    <alternativeName>
        <fullName>Cutin hydrolase</fullName>
    </alternativeName>
</protein>
<dbReference type="EC" id="3.1.1.74" evidence="5 6"/>
<dbReference type="EMBL" id="X61500">
    <property type="protein sequence ID" value="CAA43717.1"/>
    <property type="molecule type" value="Genomic_DNA"/>
</dbReference>
<dbReference type="EMBL" id="CM001236">
    <property type="protein sequence ID" value="EHA46959.1"/>
    <property type="molecule type" value="Genomic_DNA"/>
</dbReference>
<dbReference type="PIR" id="S20448">
    <property type="entry name" value="S20448"/>
</dbReference>
<dbReference type="RefSeq" id="XP_003719326.1">
    <property type="nucleotide sequence ID" value="XM_003719278.1"/>
</dbReference>
<dbReference type="SMR" id="P30272"/>
<dbReference type="ESTHER" id="maggr-cutas">
    <property type="family name" value="Cutinase"/>
</dbReference>
<dbReference type="GlyCosmos" id="P30272">
    <property type="glycosylation" value="1 site, No reported glycans"/>
</dbReference>
<dbReference type="EnsemblFungi" id="MGG_01943T0">
    <property type="protein sequence ID" value="MGG_01943T0"/>
    <property type="gene ID" value="MGG_01943"/>
</dbReference>
<dbReference type="GeneID" id="2681158"/>
<dbReference type="KEGG" id="mgr:MGG_01943"/>
<dbReference type="VEuPathDB" id="FungiDB:MGG_01943"/>
<dbReference type="eggNOG" id="ENOG502SI38">
    <property type="taxonomic scope" value="Eukaryota"/>
</dbReference>
<dbReference type="HOGENOM" id="CLU_040058_2_0_1"/>
<dbReference type="InParanoid" id="P30272"/>
<dbReference type="OMA" id="KIFCLPT"/>
<dbReference type="OrthoDB" id="3225429at2759"/>
<dbReference type="BRENDA" id="3.1.1.74">
    <property type="organism ID" value="3152"/>
</dbReference>
<dbReference type="Proteomes" id="UP000009058">
    <property type="component" value="Chromosome 6"/>
</dbReference>
<dbReference type="GO" id="GO:0005576">
    <property type="term" value="C:extracellular region"/>
    <property type="evidence" value="ECO:0007669"/>
    <property type="project" value="UniProtKB-SubCell"/>
</dbReference>
<dbReference type="GO" id="GO:0050525">
    <property type="term" value="F:cutinase activity"/>
    <property type="evidence" value="ECO:0000250"/>
    <property type="project" value="UniProtKB"/>
</dbReference>
<dbReference type="GO" id="GO:0016052">
    <property type="term" value="P:carbohydrate catabolic process"/>
    <property type="evidence" value="ECO:0007669"/>
    <property type="project" value="TreeGrafter"/>
</dbReference>
<dbReference type="FunFam" id="3.40.50.1820:FF:000235">
    <property type="entry name" value="Cutinase 1"/>
    <property type="match status" value="1"/>
</dbReference>
<dbReference type="Gene3D" id="3.40.50.1820">
    <property type="entry name" value="alpha/beta hydrolase"/>
    <property type="match status" value="1"/>
</dbReference>
<dbReference type="InterPro" id="IPR029058">
    <property type="entry name" value="AB_hydrolase_fold"/>
</dbReference>
<dbReference type="InterPro" id="IPR000675">
    <property type="entry name" value="Cutinase/axe"/>
</dbReference>
<dbReference type="InterPro" id="IPR043580">
    <property type="entry name" value="CUTINASE_1"/>
</dbReference>
<dbReference type="InterPro" id="IPR043579">
    <property type="entry name" value="CUTINASE_2"/>
</dbReference>
<dbReference type="InterPro" id="IPR011150">
    <property type="entry name" value="Cutinase_monf"/>
</dbReference>
<dbReference type="PANTHER" id="PTHR48250:SF3">
    <property type="entry name" value="CUTINASE 1-RELATED"/>
    <property type="match status" value="1"/>
</dbReference>
<dbReference type="PANTHER" id="PTHR48250">
    <property type="entry name" value="CUTINASE 2-RELATED"/>
    <property type="match status" value="1"/>
</dbReference>
<dbReference type="Pfam" id="PF01083">
    <property type="entry name" value="Cutinase"/>
    <property type="match status" value="1"/>
</dbReference>
<dbReference type="PRINTS" id="PR00129">
    <property type="entry name" value="CUTINASE"/>
</dbReference>
<dbReference type="SMART" id="SM01110">
    <property type="entry name" value="Cutinase"/>
    <property type="match status" value="1"/>
</dbReference>
<dbReference type="SUPFAM" id="SSF53474">
    <property type="entry name" value="alpha/beta-Hydrolases"/>
    <property type="match status" value="1"/>
</dbReference>
<dbReference type="PROSITE" id="PS00155">
    <property type="entry name" value="CUTINASE_1"/>
    <property type="match status" value="1"/>
</dbReference>
<dbReference type="PROSITE" id="PS00931">
    <property type="entry name" value="CUTINASE_2"/>
    <property type="match status" value="1"/>
</dbReference>